<accession>Q4L6W4</accession>
<feature type="chain" id="PRO_0000216985" description="UPF0297 protein SH1302">
    <location>
        <begin position="1"/>
        <end position="86"/>
    </location>
</feature>
<organism>
    <name type="scientific">Staphylococcus haemolyticus (strain JCSC1435)</name>
    <dbReference type="NCBI Taxonomy" id="279808"/>
    <lineage>
        <taxon>Bacteria</taxon>
        <taxon>Bacillati</taxon>
        <taxon>Bacillota</taxon>
        <taxon>Bacilli</taxon>
        <taxon>Bacillales</taxon>
        <taxon>Staphylococcaceae</taxon>
        <taxon>Staphylococcus</taxon>
    </lineage>
</organism>
<proteinExistence type="inferred from homology"/>
<name>Y1302_STAHJ</name>
<protein>
    <recommendedName>
        <fullName evidence="1">UPF0297 protein SH1302</fullName>
    </recommendedName>
</protein>
<evidence type="ECO:0000255" key="1">
    <source>
        <dbReference type="HAMAP-Rule" id="MF_01507"/>
    </source>
</evidence>
<comment type="similarity">
    <text evidence="1">Belongs to the UPF0297 family.</text>
</comment>
<gene>
    <name type="ordered locus">SH1302</name>
</gene>
<reference key="1">
    <citation type="journal article" date="2005" name="J. Bacteriol.">
        <title>Whole-genome sequencing of Staphylococcus haemolyticus uncovers the extreme plasticity of its genome and the evolution of human-colonizing staphylococcal species.</title>
        <authorList>
            <person name="Takeuchi F."/>
            <person name="Watanabe S."/>
            <person name="Baba T."/>
            <person name="Yuzawa H."/>
            <person name="Ito T."/>
            <person name="Morimoto Y."/>
            <person name="Kuroda M."/>
            <person name="Cui L."/>
            <person name="Takahashi M."/>
            <person name="Ankai A."/>
            <person name="Baba S."/>
            <person name="Fukui S."/>
            <person name="Lee J.C."/>
            <person name="Hiramatsu K."/>
        </authorList>
    </citation>
    <scope>NUCLEOTIDE SEQUENCE [LARGE SCALE GENOMIC DNA]</scope>
    <source>
        <strain>JCSC1435</strain>
    </source>
</reference>
<dbReference type="EMBL" id="AP006716">
    <property type="protein sequence ID" value="BAE04611.1"/>
    <property type="molecule type" value="Genomic_DNA"/>
</dbReference>
<dbReference type="RefSeq" id="WP_011275600.1">
    <property type="nucleotide sequence ID" value="NC_007168.1"/>
</dbReference>
<dbReference type="SMR" id="Q4L6W4"/>
<dbReference type="KEGG" id="sha:SH1302"/>
<dbReference type="eggNOG" id="COG4472">
    <property type="taxonomic scope" value="Bacteria"/>
</dbReference>
<dbReference type="HOGENOM" id="CLU_162466_0_0_9"/>
<dbReference type="OrthoDB" id="9796303at2"/>
<dbReference type="Proteomes" id="UP000000543">
    <property type="component" value="Chromosome"/>
</dbReference>
<dbReference type="HAMAP" id="MF_01507">
    <property type="entry name" value="UPF0297"/>
    <property type="match status" value="1"/>
</dbReference>
<dbReference type="InterPro" id="IPR009309">
    <property type="entry name" value="IreB"/>
</dbReference>
<dbReference type="NCBIfam" id="NF003997">
    <property type="entry name" value="PRK05473.1"/>
    <property type="match status" value="1"/>
</dbReference>
<dbReference type="PANTHER" id="PTHR40067">
    <property type="entry name" value="UPF0297 PROTEIN YRZL"/>
    <property type="match status" value="1"/>
</dbReference>
<dbReference type="PANTHER" id="PTHR40067:SF1">
    <property type="entry name" value="UPF0297 PROTEIN YRZL"/>
    <property type="match status" value="1"/>
</dbReference>
<dbReference type="Pfam" id="PF06135">
    <property type="entry name" value="IreB"/>
    <property type="match status" value="1"/>
</dbReference>
<dbReference type="PIRSF" id="PIRSF037258">
    <property type="entry name" value="DUF965_bac"/>
    <property type="match status" value="1"/>
</dbReference>
<sequence>MDNIDKTMKFDYEEIPKDNVETVLNNVHRTLEERGYNAVNQIVGYLLSGDPAYIPRQNDARNQIRHIDRDVIMEELVSNYLKENKK</sequence>